<protein>
    <recommendedName>
        <fullName evidence="1">GMP synthase [glutamine-hydrolyzing]</fullName>
        <ecNumber evidence="1">6.3.5.2</ecNumber>
    </recommendedName>
    <alternativeName>
        <fullName evidence="1">GMP synthetase</fullName>
    </alternativeName>
    <alternativeName>
        <fullName evidence="1">Glutamine amidotransferase</fullName>
    </alternativeName>
</protein>
<organism>
    <name type="scientific">Chlorobaculum tepidum (strain ATCC 49652 / DSM 12025 / NBRC 103806 / TLS)</name>
    <name type="common">Chlorobium tepidum</name>
    <dbReference type="NCBI Taxonomy" id="194439"/>
    <lineage>
        <taxon>Bacteria</taxon>
        <taxon>Pseudomonadati</taxon>
        <taxon>Chlorobiota</taxon>
        <taxon>Chlorobiia</taxon>
        <taxon>Chlorobiales</taxon>
        <taxon>Chlorobiaceae</taxon>
        <taxon>Chlorobaculum</taxon>
    </lineage>
</organism>
<dbReference type="EC" id="6.3.5.2" evidence="1"/>
<dbReference type="EMBL" id="AE006470">
    <property type="protein sequence ID" value="AAM71423.1"/>
    <property type="molecule type" value="Genomic_DNA"/>
</dbReference>
<dbReference type="RefSeq" id="NP_661081.1">
    <property type="nucleotide sequence ID" value="NC_002932.3"/>
</dbReference>
<dbReference type="SMR" id="Q8KFZ5"/>
<dbReference type="STRING" id="194439.CT0175"/>
<dbReference type="MEROPS" id="C26.957"/>
<dbReference type="EnsemblBacteria" id="AAM71423">
    <property type="protein sequence ID" value="AAM71423"/>
    <property type="gene ID" value="CT0175"/>
</dbReference>
<dbReference type="KEGG" id="cte:CT0175"/>
<dbReference type="PATRIC" id="fig|194439.7.peg.170"/>
<dbReference type="eggNOG" id="COG0518">
    <property type="taxonomic scope" value="Bacteria"/>
</dbReference>
<dbReference type="eggNOG" id="COG0519">
    <property type="taxonomic scope" value="Bacteria"/>
</dbReference>
<dbReference type="HOGENOM" id="CLU_014340_0_5_10"/>
<dbReference type="OrthoDB" id="9802219at2"/>
<dbReference type="UniPathway" id="UPA00189">
    <property type="reaction ID" value="UER00296"/>
</dbReference>
<dbReference type="Proteomes" id="UP000001007">
    <property type="component" value="Chromosome"/>
</dbReference>
<dbReference type="GO" id="GO:0005829">
    <property type="term" value="C:cytosol"/>
    <property type="evidence" value="ECO:0007669"/>
    <property type="project" value="TreeGrafter"/>
</dbReference>
<dbReference type="GO" id="GO:0005524">
    <property type="term" value="F:ATP binding"/>
    <property type="evidence" value="ECO:0007669"/>
    <property type="project" value="UniProtKB-UniRule"/>
</dbReference>
<dbReference type="GO" id="GO:0003921">
    <property type="term" value="F:GMP synthase activity"/>
    <property type="evidence" value="ECO:0007669"/>
    <property type="project" value="InterPro"/>
</dbReference>
<dbReference type="CDD" id="cd01742">
    <property type="entry name" value="GATase1_GMP_Synthase"/>
    <property type="match status" value="1"/>
</dbReference>
<dbReference type="CDD" id="cd01997">
    <property type="entry name" value="GMP_synthase_C"/>
    <property type="match status" value="1"/>
</dbReference>
<dbReference type="FunFam" id="3.30.300.10:FF:000002">
    <property type="entry name" value="GMP synthase [glutamine-hydrolyzing]"/>
    <property type="match status" value="1"/>
</dbReference>
<dbReference type="FunFam" id="3.40.50.620:FF:000001">
    <property type="entry name" value="GMP synthase [glutamine-hydrolyzing]"/>
    <property type="match status" value="1"/>
</dbReference>
<dbReference type="FunFam" id="3.40.50.880:FF:000001">
    <property type="entry name" value="GMP synthase [glutamine-hydrolyzing]"/>
    <property type="match status" value="1"/>
</dbReference>
<dbReference type="Gene3D" id="3.30.300.10">
    <property type="match status" value="1"/>
</dbReference>
<dbReference type="Gene3D" id="3.40.50.880">
    <property type="match status" value="1"/>
</dbReference>
<dbReference type="Gene3D" id="3.40.50.620">
    <property type="entry name" value="HUPs"/>
    <property type="match status" value="1"/>
</dbReference>
<dbReference type="HAMAP" id="MF_00344">
    <property type="entry name" value="GMP_synthase"/>
    <property type="match status" value="1"/>
</dbReference>
<dbReference type="InterPro" id="IPR029062">
    <property type="entry name" value="Class_I_gatase-like"/>
</dbReference>
<dbReference type="InterPro" id="IPR017926">
    <property type="entry name" value="GATASE"/>
</dbReference>
<dbReference type="InterPro" id="IPR001674">
    <property type="entry name" value="GMP_synth_C"/>
</dbReference>
<dbReference type="InterPro" id="IPR004739">
    <property type="entry name" value="GMP_synth_GATase"/>
</dbReference>
<dbReference type="InterPro" id="IPR022955">
    <property type="entry name" value="GMP_synthase"/>
</dbReference>
<dbReference type="InterPro" id="IPR025777">
    <property type="entry name" value="GMPS_ATP_PPase_dom"/>
</dbReference>
<dbReference type="InterPro" id="IPR022310">
    <property type="entry name" value="NAD/GMP_synthase"/>
</dbReference>
<dbReference type="InterPro" id="IPR014729">
    <property type="entry name" value="Rossmann-like_a/b/a_fold"/>
</dbReference>
<dbReference type="NCBIfam" id="TIGR00884">
    <property type="entry name" value="guaA_Cterm"/>
    <property type="match status" value="1"/>
</dbReference>
<dbReference type="NCBIfam" id="TIGR00888">
    <property type="entry name" value="guaA_Nterm"/>
    <property type="match status" value="1"/>
</dbReference>
<dbReference type="NCBIfam" id="NF000848">
    <property type="entry name" value="PRK00074.1"/>
    <property type="match status" value="1"/>
</dbReference>
<dbReference type="PANTHER" id="PTHR11922:SF2">
    <property type="entry name" value="GMP SYNTHASE [GLUTAMINE-HYDROLYZING]"/>
    <property type="match status" value="1"/>
</dbReference>
<dbReference type="PANTHER" id="PTHR11922">
    <property type="entry name" value="GMP SYNTHASE-RELATED"/>
    <property type="match status" value="1"/>
</dbReference>
<dbReference type="Pfam" id="PF00117">
    <property type="entry name" value="GATase"/>
    <property type="match status" value="1"/>
</dbReference>
<dbReference type="Pfam" id="PF00958">
    <property type="entry name" value="GMP_synt_C"/>
    <property type="match status" value="1"/>
</dbReference>
<dbReference type="Pfam" id="PF02540">
    <property type="entry name" value="NAD_synthase"/>
    <property type="match status" value="1"/>
</dbReference>
<dbReference type="PRINTS" id="PR00097">
    <property type="entry name" value="ANTSNTHASEII"/>
</dbReference>
<dbReference type="PRINTS" id="PR00096">
    <property type="entry name" value="GATASE"/>
</dbReference>
<dbReference type="SUPFAM" id="SSF52402">
    <property type="entry name" value="Adenine nucleotide alpha hydrolases-like"/>
    <property type="match status" value="1"/>
</dbReference>
<dbReference type="SUPFAM" id="SSF52317">
    <property type="entry name" value="Class I glutamine amidotransferase-like"/>
    <property type="match status" value="1"/>
</dbReference>
<dbReference type="SUPFAM" id="SSF54810">
    <property type="entry name" value="GMP synthetase C-terminal dimerisation domain"/>
    <property type="match status" value="1"/>
</dbReference>
<dbReference type="PROSITE" id="PS51273">
    <property type="entry name" value="GATASE_TYPE_1"/>
    <property type="match status" value="1"/>
</dbReference>
<dbReference type="PROSITE" id="PS51553">
    <property type="entry name" value="GMPS_ATP_PPASE"/>
    <property type="match status" value="1"/>
</dbReference>
<evidence type="ECO:0000255" key="1">
    <source>
        <dbReference type="HAMAP-Rule" id="MF_00344"/>
    </source>
</evidence>
<keyword id="KW-0067">ATP-binding</keyword>
<keyword id="KW-0315">Glutamine amidotransferase</keyword>
<keyword id="KW-0332">GMP biosynthesis</keyword>
<keyword id="KW-0436">Ligase</keyword>
<keyword id="KW-0547">Nucleotide-binding</keyword>
<keyword id="KW-0658">Purine biosynthesis</keyword>
<keyword id="KW-1185">Reference proteome</keyword>
<reference key="1">
    <citation type="journal article" date="2002" name="Proc. Natl. Acad. Sci. U.S.A.">
        <title>The complete genome sequence of Chlorobium tepidum TLS, a photosynthetic, anaerobic, green-sulfur bacterium.</title>
        <authorList>
            <person name="Eisen J.A."/>
            <person name="Nelson K.E."/>
            <person name="Paulsen I.T."/>
            <person name="Heidelberg J.F."/>
            <person name="Wu M."/>
            <person name="Dodson R.J."/>
            <person name="DeBoy R.T."/>
            <person name="Gwinn M.L."/>
            <person name="Nelson W.C."/>
            <person name="Haft D.H."/>
            <person name="Hickey E.K."/>
            <person name="Peterson J.D."/>
            <person name="Durkin A.S."/>
            <person name="Kolonay J.F."/>
            <person name="Yang F."/>
            <person name="Holt I.E."/>
            <person name="Umayam L.A."/>
            <person name="Mason T.M."/>
            <person name="Brenner M."/>
            <person name="Shea T.P."/>
            <person name="Parksey D.S."/>
            <person name="Nierman W.C."/>
            <person name="Feldblyum T.V."/>
            <person name="Hansen C.L."/>
            <person name="Craven M.B."/>
            <person name="Radune D."/>
            <person name="Vamathevan J.J."/>
            <person name="Khouri H.M."/>
            <person name="White O."/>
            <person name="Gruber T.M."/>
            <person name="Ketchum K.A."/>
            <person name="Venter J.C."/>
            <person name="Tettelin H."/>
            <person name="Bryant D.A."/>
            <person name="Fraser C.M."/>
        </authorList>
    </citation>
    <scope>NUCLEOTIDE SEQUENCE [LARGE SCALE GENOMIC DNA]</scope>
    <source>
        <strain>ATCC 49652 / DSM 12025 / NBRC 103806 / TLS</strain>
    </source>
</reference>
<gene>
    <name evidence="1" type="primary">guaA</name>
    <name type="ordered locus">CT0175</name>
</gene>
<accession>Q8KFZ5</accession>
<proteinExistence type="inferred from homology"/>
<feature type="chain" id="PRO_0000140111" description="GMP synthase [glutamine-hydrolyzing]">
    <location>
        <begin position="1"/>
        <end position="516"/>
    </location>
</feature>
<feature type="domain" description="Glutamine amidotransferase type-1" evidence="1">
    <location>
        <begin position="7"/>
        <end position="203"/>
    </location>
</feature>
<feature type="domain" description="GMPS ATP-PPase" evidence="1">
    <location>
        <begin position="204"/>
        <end position="391"/>
    </location>
</feature>
<feature type="active site" description="Nucleophile" evidence="1">
    <location>
        <position position="84"/>
    </location>
</feature>
<feature type="active site" evidence="1">
    <location>
        <position position="177"/>
    </location>
</feature>
<feature type="active site" evidence="1">
    <location>
        <position position="179"/>
    </location>
</feature>
<feature type="binding site" evidence="1">
    <location>
        <begin position="231"/>
        <end position="237"/>
    </location>
    <ligand>
        <name>ATP</name>
        <dbReference type="ChEBI" id="CHEBI:30616"/>
    </ligand>
</feature>
<sequence length="516" mass="57025">MATSLQSVIVLDFGSQYTQLIARRIREIGIYSEIFPYHTKAETIRAHQPKAIILSGGPNSVYDEKAFMPDPEVFSLGVPVLGICYGLQAIAKHFGGNVESSSKQEFGRAKMLVNHDESESLLFRDIPDSDVWMSHGDKVTQLPEGFRVTASTANAEVCAIESFGSKAALKVYGLQFHPEVQHSLYGKQLLSNFLIDIAGITPDWSPKSFIQHQIEEIKRVAGDSTVVCGISGGVDSTVAAVLVSKAIGDKLHCVFVDNGLLRKDEAVKVMEFLKPLGLNISLVDASDLFLGRLKGVASPEKKRKIIGRTFIQVFEKNIHDEKFLVQGTLYPDVIESVSVKGPSETIKSHHNVGGLPKRMKLKLIEPLRELFKDEVRAVGRELGIAEDILMRHPFPGPGLAVRVLGSLTRERLDVLRDADQIFIDELKSSGLYSKVWQAFSVLLPVQSVGVMGDKRTYENVLALRAVESTDGMTADWAHLPHDFLAKVSNRIINEVRGINRVVYDISSKPPATIEWE</sequence>
<comment type="function">
    <text evidence="1">Catalyzes the synthesis of GMP from XMP.</text>
</comment>
<comment type="catalytic activity">
    <reaction evidence="1">
        <text>XMP + L-glutamine + ATP + H2O = GMP + L-glutamate + AMP + diphosphate + 2 H(+)</text>
        <dbReference type="Rhea" id="RHEA:11680"/>
        <dbReference type="ChEBI" id="CHEBI:15377"/>
        <dbReference type="ChEBI" id="CHEBI:15378"/>
        <dbReference type="ChEBI" id="CHEBI:29985"/>
        <dbReference type="ChEBI" id="CHEBI:30616"/>
        <dbReference type="ChEBI" id="CHEBI:33019"/>
        <dbReference type="ChEBI" id="CHEBI:57464"/>
        <dbReference type="ChEBI" id="CHEBI:58115"/>
        <dbReference type="ChEBI" id="CHEBI:58359"/>
        <dbReference type="ChEBI" id="CHEBI:456215"/>
        <dbReference type="EC" id="6.3.5.2"/>
    </reaction>
</comment>
<comment type="pathway">
    <text evidence="1">Purine metabolism; GMP biosynthesis; GMP from XMP (L-Gln route): step 1/1.</text>
</comment>
<comment type="subunit">
    <text evidence="1">Homodimer.</text>
</comment>
<name>GUAA_CHLTE</name>